<accession>Q8DDY6</accession>
<proteinExistence type="inferred from homology"/>
<reference key="1">
    <citation type="submission" date="2002-12" db="EMBL/GenBank/DDBJ databases">
        <title>Complete genome sequence of Vibrio vulnificus CMCP6.</title>
        <authorList>
            <person name="Rhee J.H."/>
            <person name="Kim S.Y."/>
            <person name="Chung S.S."/>
            <person name="Kim J.J."/>
            <person name="Moon Y.H."/>
            <person name="Jeong H."/>
            <person name="Choy H.E."/>
        </authorList>
    </citation>
    <scope>NUCLEOTIDE SEQUENCE [LARGE SCALE GENOMIC DNA]</scope>
    <source>
        <strain>CMCP6</strain>
    </source>
</reference>
<name>COAD_VIBVU</name>
<gene>
    <name evidence="1" type="primary">coaD</name>
    <name type="ordered locus">VV1_0819</name>
</gene>
<feature type="chain" id="PRO_0000156306" description="Phosphopantetheine adenylyltransferase">
    <location>
        <begin position="1"/>
        <end position="164"/>
    </location>
</feature>
<feature type="binding site" evidence="1">
    <location>
        <begin position="14"/>
        <end position="15"/>
    </location>
    <ligand>
        <name>ATP</name>
        <dbReference type="ChEBI" id="CHEBI:30616"/>
    </ligand>
</feature>
<feature type="binding site" evidence="1">
    <location>
        <position position="14"/>
    </location>
    <ligand>
        <name>substrate</name>
    </ligand>
</feature>
<feature type="binding site" evidence="1">
    <location>
        <position position="22"/>
    </location>
    <ligand>
        <name>ATP</name>
        <dbReference type="ChEBI" id="CHEBI:30616"/>
    </ligand>
</feature>
<feature type="binding site" evidence="1">
    <location>
        <position position="46"/>
    </location>
    <ligand>
        <name>substrate</name>
    </ligand>
</feature>
<feature type="binding site" evidence="1">
    <location>
        <position position="78"/>
    </location>
    <ligand>
        <name>substrate</name>
    </ligand>
</feature>
<feature type="binding site" evidence="1">
    <location>
        <position position="92"/>
    </location>
    <ligand>
        <name>substrate</name>
    </ligand>
</feature>
<feature type="binding site" evidence="1">
    <location>
        <begin position="93"/>
        <end position="95"/>
    </location>
    <ligand>
        <name>ATP</name>
        <dbReference type="ChEBI" id="CHEBI:30616"/>
    </ligand>
</feature>
<feature type="binding site" evidence="1">
    <location>
        <position position="103"/>
    </location>
    <ligand>
        <name>ATP</name>
        <dbReference type="ChEBI" id="CHEBI:30616"/>
    </ligand>
</feature>
<feature type="binding site" evidence="1">
    <location>
        <begin position="128"/>
        <end position="134"/>
    </location>
    <ligand>
        <name>ATP</name>
        <dbReference type="ChEBI" id="CHEBI:30616"/>
    </ligand>
</feature>
<feature type="site" description="Transition state stabilizer" evidence="1">
    <location>
        <position position="22"/>
    </location>
</feature>
<comment type="function">
    <text evidence="1">Reversibly transfers an adenylyl group from ATP to 4'-phosphopantetheine, yielding dephospho-CoA (dPCoA) and pyrophosphate.</text>
</comment>
<comment type="catalytic activity">
    <reaction evidence="1">
        <text>(R)-4'-phosphopantetheine + ATP + H(+) = 3'-dephospho-CoA + diphosphate</text>
        <dbReference type="Rhea" id="RHEA:19801"/>
        <dbReference type="ChEBI" id="CHEBI:15378"/>
        <dbReference type="ChEBI" id="CHEBI:30616"/>
        <dbReference type="ChEBI" id="CHEBI:33019"/>
        <dbReference type="ChEBI" id="CHEBI:57328"/>
        <dbReference type="ChEBI" id="CHEBI:61723"/>
        <dbReference type="EC" id="2.7.7.3"/>
    </reaction>
</comment>
<comment type="cofactor">
    <cofactor evidence="1">
        <name>Mg(2+)</name>
        <dbReference type="ChEBI" id="CHEBI:18420"/>
    </cofactor>
</comment>
<comment type="pathway">
    <text evidence="1">Cofactor biosynthesis; coenzyme A biosynthesis; CoA from (R)-pantothenate: step 4/5.</text>
</comment>
<comment type="subunit">
    <text evidence="1">Homohexamer.</text>
</comment>
<comment type="subcellular location">
    <subcellularLocation>
        <location evidence="1">Cytoplasm</location>
    </subcellularLocation>
</comment>
<comment type="similarity">
    <text evidence="1">Belongs to the bacterial CoaD family.</text>
</comment>
<keyword id="KW-0067">ATP-binding</keyword>
<keyword id="KW-0173">Coenzyme A biosynthesis</keyword>
<keyword id="KW-0963">Cytoplasm</keyword>
<keyword id="KW-0460">Magnesium</keyword>
<keyword id="KW-0547">Nucleotide-binding</keyword>
<keyword id="KW-0548">Nucleotidyltransferase</keyword>
<keyword id="KW-0808">Transferase</keyword>
<evidence type="ECO:0000255" key="1">
    <source>
        <dbReference type="HAMAP-Rule" id="MF_00151"/>
    </source>
</evidence>
<dbReference type="EC" id="2.7.7.3" evidence="1"/>
<dbReference type="EMBL" id="AE016795">
    <property type="protein sequence ID" value="AAO09323.1"/>
    <property type="molecule type" value="Genomic_DNA"/>
</dbReference>
<dbReference type="RefSeq" id="WP_011078889.1">
    <property type="nucleotide sequence ID" value="NC_004459.3"/>
</dbReference>
<dbReference type="SMR" id="Q8DDY6"/>
<dbReference type="KEGG" id="vvu:VV1_0819"/>
<dbReference type="HOGENOM" id="CLU_100149_0_1_6"/>
<dbReference type="UniPathway" id="UPA00241">
    <property type="reaction ID" value="UER00355"/>
</dbReference>
<dbReference type="Proteomes" id="UP000002275">
    <property type="component" value="Chromosome 1"/>
</dbReference>
<dbReference type="GO" id="GO:0005737">
    <property type="term" value="C:cytoplasm"/>
    <property type="evidence" value="ECO:0007669"/>
    <property type="project" value="UniProtKB-SubCell"/>
</dbReference>
<dbReference type="GO" id="GO:0005524">
    <property type="term" value="F:ATP binding"/>
    <property type="evidence" value="ECO:0007669"/>
    <property type="project" value="UniProtKB-KW"/>
</dbReference>
<dbReference type="GO" id="GO:0004595">
    <property type="term" value="F:pantetheine-phosphate adenylyltransferase activity"/>
    <property type="evidence" value="ECO:0007669"/>
    <property type="project" value="UniProtKB-UniRule"/>
</dbReference>
<dbReference type="GO" id="GO:0015937">
    <property type="term" value="P:coenzyme A biosynthetic process"/>
    <property type="evidence" value="ECO:0007669"/>
    <property type="project" value="UniProtKB-UniRule"/>
</dbReference>
<dbReference type="CDD" id="cd02163">
    <property type="entry name" value="PPAT"/>
    <property type="match status" value="1"/>
</dbReference>
<dbReference type="FunFam" id="3.40.50.620:FF:000012">
    <property type="entry name" value="Phosphopantetheine adenylyltransferase"/>
    <property type="match status" value="1"/>
</dbReference>
<dbReference type="Gene3D" id="3.40.50.620">
    <property type="entry name" value="HUPs"/>
    <property type="match status" value="1"/>
</dbReference>
<dbReference type="HAMAP" id="MF_00151">
    <property type="entry name" value="PPAT_bact"/>
    <property type="match status" value="1"/>
</dbReference>
<dbReference type="InterPro" id="IPR004821">
    <property type="entry name" value="Cyt_trans-like"/>
</dbReference>
<dbReference type="InterPro" id="IPR001980">
    <property type="entry name" value="PPAT"/>
</dbReference>
<dbReference type="InterPro" id="IPR014729">
    <property type="entry name" value="Rossmann-like_a/b/a_fold"/>
</dbReference>
<dbReference type="NCBIfam" id="TIGR01510">
    <property type="entry name" value="coaD_prev_kdtB"/>
    <property type="match status" value="1"/>
</dbReference>
<dbReference type="NCBIfam" id="TIGR00125">
    <property type="entry name" value="cyt_tran_rel"/>
    <property type="match status" value="1"/>
</dbReference>
<dbReference type="PANTHER" id="PTHR21342">
    <property type="entry name" value="PHOSPHOPANTETHEINE ADENYLYLTRANSFERASE"/>
    <property type="match status" value="1"/>
</dbReference>
<dbReference type="PANTHER" id="PTHR21342:SF1">
    <property type="entry name" value="PHOSPHOPANTETHEINE ADENYLYLTRANSFERASE"/>
    <property type="match status" value="1"/>
</dbReference>
<dbReference type="Pfam" id="PF01467">
    <property type="entry name" value="CTP_transf_like"/>
    <property type="match status" value="1"/>
</dbReference>
<dbReference type="PRINTS" id="PR01020">
    <property type="entry name" value="LPSBIOSNTHSS"/>
</dbReference>
<dbReference type="SUPFAM" id="SSF52374">
    <property type="entry name" value="Nucleotidylyl transferase"/>
    <property type="match status" value="1"/>
</dbReference>
<organism>
    <name type="scientific">Vibrio vulnificus (strain CMCP6)</name>
    <dbReference type="NCBI Taxonomy" id="216895"/>
    <lineage>
        <taxon>Bacteria</taxon>
        <taxon>Pseudomonadati</taxon>
        <taxon>Pseudomonadota</taxon>
        <taxon>Gammaproteobacteria</taxon>
        <taxon>Vibrionales</taxon>
        <taxon>Vibrionaceae</taxon>
        <taxon>Vibrio</taxon>
    </lineage>
</organism>
<protein>
    <recommendedName>
        <fullName evidence="1">Phosphopantetheine adenylyltransferase</fullName>
        <ecNumber evidence="1">2.7.7.3</ecNumber>
    </recommendedName>
    <alternativeName>
        <fullName evidence="1">Dephospho-CoA pyrophosphorylase</fullName>
    </alternativeName>
    <alternativeName>
        <fullName evidence="1">Pantetheine-phosphate adenylyltransferase</fullName>
        <shortName evidence="1">PPAT</shortName>
    </alternativeName>
</protein>
<sequence>MSKKALSRVVYPGTFDPITNGHLDLIERAAKMFDEVIIAVAASPSKNTMFTLEERVDFARQVTRHLDNVTAQGFSGLMVDFARAVDANVLIRGLRTTVDFEYEFGLTNMYRRLLPGLESVFLTPSEEHAFISSTIVREVAIHGGDVTQFVPTVVAEALHQKKKV</sequence>